<comment type="function">
    <text evidence="1">The UvrABC repair system catalyzes the recognition and processing of DNA lesions. UvrA is an ATPase and a DNA-binding protein. A damage recognition complex composed of 2 UvrA and 2 UvrB subunits scans DNA for abnormalities. When the presence of a lesion has been verified by UvrB, the UvrA molecules dissociate.</text>
</comment>
<comment type="subunit">
    <text evidence="1">Forms a heterotetramer with UvrB during the search for lesions.</text>
</comment>
<comment type="subcellular location">
    <subcellularLocation>
        <location evidence="1">Cytoplasm</location>
    </subcellularLocation>
</comment>
<comment type="similarity">
    <text evidence="1">Belongs to the ABC transporter superfamily. UvrA family.</text>
</comment>
<accession>P63381</accession>
<accession>A0A1R3XYX6</accession>
<accession>P94972</accession>
<accession>X2BIR9</accession>
<proteinExistence type="inferred from homology"/>
<organism>
    <name type="scientific">Mycobacterium bovis (strain ATCC BAA-935 / AF2122/97)</name>
    <dbReference type="NCBI Taxonomy" id="233413"/>
    <lineage>
        <taxon>Bacteria</taxon>
        <taxon>Bacillati</taxon>
        <taxon>Actinomycetota</taxon>
        <taxon>Actinomycetes</taxon>
        <taxon>Mycobacteriales</taxon>
        <taxon>Mycobacteriaceae</taxon>
        <taxon>Mycobacterium</taxon>
        <taxon>Mycobacterium tuberculosis complex</taxon>
    </lineage>
</organism>
<dbReference type="EMBL" id="LT708304">
    <property type="protein sequence ID" value="SIU00268.1"/>
    <property type="molecule type" value="Genomic_DNA"/>
</dbReference>
<dbReference type="RefSeq" id="NP_855317.1">
    <property type="nucleotide sequence ID" value="NC_002945.3"/>
</dbReference>
<dbReference type="RefSeq" id="WP_003408092.1">
    <property type="nucleotide sequence ID" value="NC_002945.4"/>
</dbReference>
<dbReference type="SMR" id="P63381"/>
<dbReference type="KEGG" id="mbo:BQ2027_MB1664"/>
<dbReference type="PATRIC" id="fig|233413.5.peg.1817"/>
<dbReference type="Proteomes" id="UP000001419">
    <property type="component" value="Chromosome"/>
</dbReference>
<dbReference type="GO" id="GO:0005737">
    <property type="term" value="C:cytoplasm"/>
    <property type="evidence" value="ECO:0007669"/>
    <property type="project" value="UniProtKB-SubCell"/>
</dbReference>
<dbReference type="GO" id="GO:0009380">
    <property type="term" value="C:excinuclease repair complex"/>
    <property type="evidence" value="ECO:0007669"/>
    <property type="project" value="InterPro"/>
</dbReference>
<dbReference type="GO" id="GO:0005524">
    <property type="term" value="F:ATP binding"/>
    <property type="evidence" value="ECO:0007669"/>
    <property type="project" value="UniProtKB-UniRule"/>
</dbReference>
<dbReference type="GO" id="GO:0016887">
    <property type="term" value="F:ATP hydrolysis activity"/>
    <property type="evidence" value="ECO:0007669"/>
    <property type="project" value="InterPro"/>
</dbReference>
<dbReference type="GO" id="GO:0003677">
    <property type="term" value="F:DNA binding"/>
    <property type="evidence" value="ECO:0007669"/>
    <property type="project" value="UniProtKB-UniRule"/>
</dbReference>
<dbReference type="GO" id="GO:0009381">
    <property type="term" value="F:excinuclease ABC activity"/>
    <property type="evidence" value="ECO:0007669"/>
    <property type="project" value="UniProtKB-UniRule"/>
</dbReference>
<dbReference type="GO" id="GO:0008270">
    <property type="term" value="F:zinc ion binding"/>
    <property type="evidence" value="ECO:0007669"/>
    <property type="project" value="UniProtKB-UniRule"/>
</dbReference>
<dbReference type="GO" id="GO:0006289">
    <property type="term" value="P:nucleotide-excision repair"/>
    <property type="evidence" value="ECO:0007669"/>
    <property type="project" value="UniProtKB-UniRule"/>
</dbReference>
<dbReference type="GO" id="GO:0009432">
    <property type="term" value="P:SOS response"/>
    <property type="evidence" value="ECO:0007669"/>
    <property type="project" value="UniProtKB-UniRule"/>
</dbReference>
<dbReference type="CDD" id="cd03270">
    <property type="entry name" value="ABC_UvrA_I"/>
    <property type="match status" value="1"/>
</dbReference>
<dbReference type="CDD" id="cd03271">
    <property type="entry name" value="ABC_UvrA_II"/>
    <property type="match status" value="1"/>
</dbReference>
<dbReference type="FunFam" id="1.10.8.280:FF:000002">
    <property type="entry name" value="UvrABC system protein A"/>
    <property type="match status" value="1"/>
</dbReference>
<dbReference type="FunFam" id="1.20.1580.10:FF:000001">
    <property type="entry name" value="UvrABC system protein A"/>
    <property type="match status" value="3"/>
</dbReference>
<dbReference type="FunFam" id="1.20.1580.10:FF:000002">
    <property type="entry name" value="UvrABC system protein A"/>
    <property type="match status" value="1"/>
</dbReference>
<dbReference type="FunFam" id="3.30.190.20:FF:000003">
    <property type="entry name" value="UvrABC system protein A"/>
    <property type="match status" value="1"/>
</dbReference>
<dbReference type="Gene3D" id="3.30.190.20">
    <property type="match status" value="1"/>
</dbReference>
<dbReference type="Gene3D" id="1.10.8.280">
    <property type="entry name" value="ABC transporter ATPase domain-like"/>
    <property type="match status" value="1"/>
</dbReference>
<dbReference type="Gene3D" id="1.20.1580.10">
    <property type="entry name" value="ABC transporter ATPase like domain"/>
    <property type="match status" value="3"/>
</dbReference>
<dbReference type="Gene3D" id="3.40.50.300">
    <property type="entry name" value="P-loop containing nucleotide triphosphate hydrolases"/>
    <property type="match status" value="3"/>
</dbReference>
<dbReference type="HAMAP" id="MF_00205">
    <property type="entry name" value="UvrA"/>
    <property type="match status" value="1"/>
</dbReference>
<dbReference type="InterPro" id="IPR003439">
    <property type="entry name" value="ABC_transporter-like_ATP-bd"/>
</dbReference>
<dbReference type="InterPro" id="IPR017871">
    <property type="entry name" value="ABC_transporter-like_CS"/>
</dbReference>
<dbReference type="InterPro" id="IPR027417">
    <property type="entry name" value="P-loop_NTPase"/>
</dbReference>
<dbReference type="InterPro" id="IPR004602">
    <property type="entry name" value="UvrA"/>
</dbReference>
<dbReference type="InterPro" id="IPR041552">
    <property type="entry name" value="UvrA_DNA-bd"/>
</dbReference>
<dbReference type="InterPro" id="IPR041102">
    <property type="entry name" value="UvrA_inter"/>
</dbReference>
<dbReference type="NCBIfam" id="NF001503">
    <property type="entry name" value="PRK00349.1"/>
    <property type="match status" value="1"/>
</dbReference>
<dbReference type="NCBIfam" id="TIGR00630">
    <property type="entry name" value="uvra"/>
    <property type="match status" value="1"/>
</dbReference>
<dbReference type="PANTHER" id="PTHR43152">
    <property type="entry name" value="UVRABC SYSTEM PROTEIN A"/>
    <property type="match status" value="1"/>
</dbReference>
<dbReference type="PANTHER" id="PTHR43152:SF3">
    <property type="entry name" value="UVRABC SYSTEM PROTEIN A"/>
    <property type="match status" value="1"/>
</dbReference>
<dbReference type="Pfam" id="PF17755">
    <property type="entry name" value="UvrA_DNA-bind"/>
    <property type="match status" value="1"/>
</dbReference>
<dbReference type="Pfam" id="PF17760">
    <property type="entry name" value="UvrA_inter"/>
    <property type="match status" value="1"/>
</dbReference>
<dbReference type="SUPFAM" id="SSF52540">
    <property type="entry name" value="P-loop containing nucleoside triphosphate hydrolases"/>
    <property type="match status" value="2"/>
</dbReference>
<dbReference type="PROSITE" id="PS00211">
    <property type="entry name" value="ABC_TRANSPORTER_1"/>
    <property type="match status" value="2"/>
</dbReference>
<dbReference type="PROSITE" id="PS50893">
    <property type="entry name" value="ABC_TRANSPORTER_2"/>
    <property type="match status" value="1"/>
</dbReference>
<feature type="chain" id="PRO_0000093068" description="UvrABC system protein A">
    <location>
        <begin position="1"/>
        <end position="972"/>
    </location>
</feature>
<feature type="domain" description="ABC transporter 1" evidence="1">
    <location>
        <begin position="315"/>
        <end position="601"/>
    </location>
</feature>
<feature type="domain" description="ABC transporter 2" evidence="1">
    <location>
        <begin position="621"/>
        <end position="950"/>
    </location>
</feature>
<feature type="zinc finger region" description="C4-type; atypical" evidence="1">
    <location>
        <begin position="257"/>
        <end position="285"/>
    </location>
</feature>
<feature type="zinc finger region" description="C4-type" evidence="1">
    <location>
        <begin position="753"/>
        <end position="779"/>
    </location>
</feature>
<feature type="binding site" evidence="1">
    <location>
        <begin position="32"/>
        <end position="39"/>
    </location>
    <ligand>
        <name>ATP</name>
        <dbReference type="ChEBI" id="CHEBI:30616"/>
    </ligand>
</feature>
<feature type="binding site" evidence="1">
    <location>
        <begin position="654"/>
        <end position="661"/>
    </location>
    <ligand>
        <name>ATP</name>
        <dbReference type="ChEBI" id="CHEBI:30616"/>
    </ligand>
</feature>
<keyword id="KW-0067">ATP-binding</keyword>
<keyword id="KW-0963">Cytoplasm</keyword>
<keyword id="KW-0227">DNA damage</keyword>
<keyword id="KW-0228">DNA excision</keyword>
<keyword id="KW-0234">DNA repair</keyword>
<keyword id="KW-0238">DNA-binding</keyword>
<keyword id="KW-0267">Excision nuclease</keyword>
<keyword id="KW-0479">Metal-binding</keyword>
<keyword id="KW-0547">Nucleotide-binding</keyword>
<keyword id="KW-1185">Reference proteome</keyword>
<keyword id="KW-0677">Repeat</keyword>
<keyword id="KW-0742">SOS response</keyword>
<keyword id="KW-0862">Zinc</keyword>
<keyword id="KW-0863">Zinc-finger</keyword>
<sequence length="972" mass="106132">MADRLIVKGAREHNLRSVDLDLPRDALIVFTGLSGSGKSSLAFDTIFAEGQRRYVESLSAYARQFLGQMDKPDVDFIEGLSPAVSIDQKSTNRNPRSTVGTITEVYDYLRLLYARAGTPHCPTCGERVARQTPQQIVDQVLAMPEGTRFLVLAPVVRTRKGEFADLFDKLNAQGYSRVRVDGVVHPLTDPPKLKKQEKHDIEVVVDRLTVKAAAKRRLTDSVETALNLADGIVVLEFVDHELGAPHREQRFSEKLACPNGHALAVDDLEPRSFSFNSPYGACPECSGLGIRKEVDPELVVPDPDRTLAQGAVAPWSNGHTAEYFTRMMAGLGEALGFDVDTPWRKLPAKARKAILEGADEQVHVRYRNRYGRTRSYYADFEGVLAFLQRKMSQTESEQMKERYEGFMRDVPCPVCAGTRLKPEILAVTLAGESKGEHGAKSIAEVCELSIADCADFLNALTLGPREQAIAGQVLKEIRSRLGFLLDVGLEYLSLSRAAATLSGGEAQRIRLATQIGSGLVGVLYVLDEPSIGLHQRDNRRLIETLTRLRDLGNTLIVVEHDEDTIEHADWIVDIGPGAGEHGGRIVHSGPYDELLRNKDSITGAYLSGRESIEIPAIRRSVDPRRQLTVVGAREHNLRGIDVSFPLGVLTSVTGVSGSGKSTLVNDILAAVLANRLNGARQVPGRHTRVTGLDYLDKLVRVDQSPIGRTPRSNPATYTGVFDKIRTLFAATTEAKVRGYQPGRFSFNVKGGRCEACTGDGTIKIEMNFLPDVYVPCEVCQGARYNRETLEVHYKGKTVSEVLDMSIEEAAEFFEPIAGVHRYLRTLVDVGLGYVRLGQPAPTLSGGEAQRVKLASELQKRSTGRTVYILDEPTTGLHFDDIRKLLNVINGLVDKGNTVIVIEHNLDVIKTSDWIIDLGPEGGAGGGTVVAQGTPEDVAAVPASYTGKFLAEVVGGGASAATSRSNRRRNVSA</sequence>
<reference key="1">
    <citation type="journal article" date="2003" name="Proc. Natl. Acad. Sci. U.S.A.">
        <title>The complete genome sequence of Mycobacterium bovis.</title>
        <authorList>
            <person name="Garnier T."/>
            <person name="Eiglmeier K."/>
            <person name="Camus J.-C."/>
            <person name="Medina N."/>
            <person name="Mansoor H."/>
            <person name="Pryor M."/>
            <person name="Duthoy S."/>
            <person name="Grondin S."/>
            <person name="Lacroix C."/>
            <person name="Monsempe C."/>
            <person name="Simon S."/>
            <person name="Harris B."/>
            <person name="Atkin R."/>
            <person name="Doggett J."/>
            <person name="Mayes R."/>
            <person name="Keating L."/>
            <person name="Wheeler P.R."/>
            <person name="Parkhill J."/>
            <person name="Barrell B.G."/>
            <person name="Cole S.T."/>
            <person name="Gordon S.V."/>
            <person name="Hewinson R.G."/>
        </authorList>
    </citation>
    <scope>NUCLEOTIDE SEQUENCE [LARGE SCALE GENOMIC DNA]</scope>
    <source>
        <strain>ATCC BAA-935 / AF2122/97</strain>
    </source>
</reference>
<reference key="2">
    <citation type="journal article" date="2017" name="Genome Announc.">
        <title>Updated reference genome sequence and annotation of Mycobacterium bovis AF2122/97.</title>
        <authorList>
            <person name="Malone K.M."/>
            <person name="Farrell D."/>
            <person name="Stuber T.P."/>
            <person name="Schubert O.T."/>
            <person name="Aebersold R."/>
            <person name="Robbe-Austerman S."/>
            <person name="Gordon S.V."/>
        </authorList>
    </citation>
    <scope>NUCLEOTIDE SEQUENCE [LARGE SCALE GENOMIC DNA]</scope>
    <scope>GENOME REANNOTATION</scope>
    <source>
        <strain>ATCC BAA-935 / AF2122/97</strain>
    </source>
</reference>
<protein>
    <recommendedName>
        <fullName evidence="1">UvrABC system protein A</fullName>
        <shortName evidence="1">UvrA protein</shortName>
    </recommendedName>
    <alternativeName>
        <fullName evidence="1">Excinuclease ABC subunit A</fullName>
    </alternativeName>
</protein>
<evidence type="ECO:0000255" key="1">
    <source>
        <dbReference type="HAMAP-Rule" id="MF_00205"/>
    </source>
</evidence>
<gene>
    <name evidence="1" type="primary">uvrA</name>
    <name type="ordered locus">BQ2027_MB1664</name>
</gene>
<name>UVRA_MYCBO</name>